<dbReference type="EC" id="2.4.2.-" evidence="1"/>
<dbReference type="EMBL" id="CP001688">
    <property type="protein sequence ID" value="ACV48976.1"/>
    <property type="molecule type" value="Genomic_DNA"/>
</dbReference>
<dbReference type="SMR" id="C7P0W1"/>
<dbReference type="STRING" id="485914.Hmuk_2871"/>
<dbReference type="GeneID" id="8412422"/>
<dbReference type="KEGG" id="hmu:Hmuk_2871"/>
<dbReference type="eggNOG" id="arCOG00030">
    <property type="taxonomic scope" value="Archaea"/>
</dbReference>
<dbReference type="HOGENOM" id="CLU_126376_0_0_2"/>
<dbReference type="OrthoDB" id="8323at2157"/>
<dbReference type="Proteomes" id="UP000001746">
    <property type="component" value="Chromosome"/>
</dbReference>
<dbReference type="GO" id="GO:0016740">
    <property type="term" value="F:transferase activity"/>
    <property type="evidence" value="ECO:0007669"/>
    <property type="project" value="UniProtKB-KW"/>
</dbReference>
<dbReference type="GO" id="GO:0006166">
    <property type="term" value="P:purine ribonucleoside salvage"/>
    <property type="evidence" value="ECO:0007669"/>
    <property type="project" value="UniProtKB-KW"/>
</dbReference>
<dbReference type="CDD" id="cd06223">
    <property type="entry name" value="PRTases_typeI"/>
    <property type="match status" value="1"/>
</dbReference>
<dbReference type="Gene3D" id="3.40.50.2020">
    <property type="match status" value="1"/>
</dbReference>
<dbReference type="HAMAP" id="MF_01467">
    <property type="entry name" value="Hypx_phosphoribosyltr"/>
    <property type="match status" value="1"/>
</dbReference>
<dbReference type="InterPro" id="IPR026597">
    <property type="entry name" value="HGPRTase-like"/>
</dbReference>
<dbReference type="InterPro" id="IPR000836">
    <property type="entry name" value="PRibTrfase_dom"/>
</dbReference>
<dbReference type="InterPro" id="IPR029057">
    <property type="entry name" value="PRTase-like"/>
</dbReference>
<dbReference type="InterPro" id="IPR050118">
    <property type="entry name" value="Pur/Pyrimidine_PRTase"/>
</dbReference>
<dbReference type="NCBIfam" id="NF040646">
    <property type="entry name" value="HPT_Archaea"/>
    <property type="match status" value="1"/>
</dbReference>
<dbReference type="NCBIfam" id="NF002635">
    <property type="entry name" value="PRK02304.1-4"/>
    <property type="match status" value="1"/>
</dbReference>
<dbReference type="PANTHER" id="PTHR43864">
    <property type="entry name" value="HYPOXANTHINE/GUANINE PHOSPHORIBOSYLTRANSFERASE"/>
    <property type="match status" value="1"/>
</dbReference>
<dbReference type="PANTHER" id="PTHR43864:SF1">
    <property type="entry name" value="XANTHINE PHOSPHORIBOSYLTRANSFERASE"/>
    <property type="match status" value="1"/>
</dbReference>
<dbReference type="Pfam" id="PF00156">
    <property type="entry name" value="Pribosyltran"/>
    <property type="match status" value="1"/>
</dbReference>
<dbReference type="SUPFAM" id="SSF53271">
    <property type="entry name" value="PRTase-like"/>
    <property type="match status" value="1"/>
</dbReference>
<dbReference type="PROSITE" id="PS00103">
    <property type="entry name" value="PUR_PYR_PR_TRANSFER"/>
    <property type="match status" value="1"/>
</dbReference>
<reference key="1">
    <citation type="journal article" date="2009" name="Stand. Genomic Sci.">
        <title>Complete genome sequence of Halomicrobium mukohataei type strain (arg-2).</title>
        <authorList>
            <person name="Tindall B.J."/>
            <person name="Schneider S."/>
            <person name="Lapidus A."/>
            <person name="Copeland A."/>
            <person name="Glavina Del Rio T."/>
            <person name="Nolan M."/>
            <person name="Lucas S."/>
            <person name="Chen F."/>
            <person name="Tice H."/>
            <person name="Cheng J.F."/>
            <person name="Saunders E."/>
            <person name="Bruce D."/>
            <person name="Goodwin L."/>
            <person name="Pitluck S."/>
            <person name="Mikhailova N."/>
            <person name="Pati A."/>
            <person name="Ivanova N."/>
            <person name="Mavrommatis K."/>
            <person name="Chen A."/>
            <person name="Palaniappan K."/>
            <person name="Chain P."/>
            <person name="Land M."/>
            <person name="Hauser L."/>
            <person name="Chang Y.J."/>
            <person name="Jeffries C.D."/>
            <person name="Brettin T."/>
            <person name="Han C."/>
            <person name="Rohde M."/>
            <person name="Goker M."/>
            <person name="Bristow J."/>
            <person name="Eisen J.A."/>
            <person name="Markowitz V."/>
            <person name="Hugenholtz P."/>
            <person name="Klenk H.P."/>
            <person name="Kyrpides N.C."/>
            <person name="Detter J.C."/>
        </authorList>
    </citation>
    <scope>NUCLEOTIDE SEQUENCE [LARGE SCALE GENOMIC DNA]</scope>
    <source>
        <strain>ATCC 700874 / DSM 12286 / JCM 9738 / NCIMB 13541</strain>
    </source>
</reference>
<name>HPRL_HALMD</name>
<feature type="chain" id="PRO_0000415454" description="HGPRTase-like protein">
    <location>
        <begin position="1"/>
        <end position="189"/>
    </location>
</feature>
<gene>
    <name type="ordered locus">Hmuk_2871</name>
</gene>
<protein>
    <recommendedName>
        <fullName evidence="1">HGPRTase-like protein</fullName>
        <ecNumber evidence="1">2.4.2.-</ecNumber>
    </recommendedName>
</protein>
<comment type="function">
    <text evidence="1">May catalyze a purine salvage reaction, the substrate is unknown.</text>
</comment>
<comment type="similarity">
    <text evidence="1">Belongs to the purine/pyrimidine phosphoribosyltransferase family. Archaeal HPRT subfamily.</text>
</comment>
<accession>C7P0W1</accession>
<keyword id="KW-0660">Purine salvage</keyword>
<keyword id="KW-1185">Reference proteome</keyword>
<keyword id="KW-0808">Transferase</keyword>
<proteinExistence type="inferred from homology"/>
<sequence length="189" mass="20617">MDQLKQSLLDAPIIEKDGYHYFVHPISDGVPMLRPELLREIVIKIIRKAELEDVDKIVTPAAMGIHISTAVSLMTDIPLVVVRKRQYGLDGEVSLSQVTGYSENEMYVNDVYEGDRVLVLDDVLSTGGTLAALTGALEDIGADICDIVCVIKKEGGENKLADDGYHAKTLINVDVVDGEVVVVDDYGDD</sequence>
<evidence type="ECO:0000255" key="1">
    <source>
        <dbReference type="HAMAP-Rule" id="MF_01467"/>
    </source>
</evidence>
<organism>
    <name type="scientific">Halomicrobium mukohataei (strain ATCC 700874 / DSM 12286 / JCM 9738 / NCIMB 13541)</name>
    <name type="common">Haloarcula mukohataei</name>
    <dbReference type="NCBI Taxonomy" id="485914"/>
    <lineage>
        <taxon>Archaea</taxon>
        <taxon>Methanobacteriati</taxon>
        <taxon>Methanobacteriota</taxon>
        <taxon>Stenosarchaea group</taxon>
        <taxon>Halobacteria</taxon>
        <taxon>Halobacteriales</taxon>
        <taxon>Haloarculaceae</taxon>
        <taxon>Halomicrobium</taxon>
    </lineage>
</organism>